<evidence type="ECO:0000255" key="1">
    <source>
        <dbReference type="HAMAP-Rule" id="MF_01037"/>
    </source>
</evidence>
<keyword id="KW-0963">Cytoplasm</keyword>
<keyword id="KW-0274">FAD</keyword>
<keyword id="KW-0285">Flavoprotein</keyword>
<keyword id="KW-0489">Methyltransferase</keyword>
<keyword id="KW-0520">NAD</keyword>
<keyword id="KW-0521">NADP</keyword>
<keyword id="KW-1185">Reference proteome</keyword>
<keyword id="KW-0808">Transferase</keyword>
<keyword id="KW-0819">tRNA processing</keyword>
<proteinExistence type="inferred from homology"/>
<accession>Q8DZX5</accession>
<feature type="chain" id="PRO_0000117270" description="Methylenetetrahydrofolate--tRNA-(uracil-5-)-methyltransferase TrmFO">
    <location>
        <begin position="1"/>
        <end position="444"/>
    </location>
</feature>
<feature type="binding site" evidence="1">
    <location>
        <begin position="10"/>
        <end position="15"/>
    </location>
    <ligand>
        <name>FAD</name>
        <dbReference type="ChEBI" id="CHEBI:57692"/>
    </ligand>
</feature>
<sequence>MSQSYINVIGAGLAGSEAAYQIAKRGIPVKLYEMRGVKSTPQHKTDNFAELVCSNSFRGDSLTNAVGLLKEEMRRLDSIIMRNGEAHRVPAGGAMAVDREGYSEAVTEEIHKHPLIEVIRDEITDIPGDAITVIATGPLTSDSLAAKIHELNGGDGFYFYDAAAPIVDKNTIDINKVYLKSRYDKGEAAYLNCPMTKEEFMAFHEALTTAEEAPLNSFEKEKYFEGCMPIEVMAKRGIKTMLYGPMKPVGLEYPEDYKGPRDGEFKTPYAVVQLRQDNAAGSLYNIVGFQTHLKWGEQKRVFQMIPGLENAEFVRYGVMHRNSYMDSPNLLNQTFATRKNPNLFFAGQMTGVEGYVESAASGLVAGINAVRRFNGESEVVFPQTTAIGALPHYITHTDSKHFQPMNVNFGIIKELEGPRIRDKKERYEAIATRALKDLEKFLNY</sequence>
<comment type="function">
    <text evidence="1">Catalyzes the folate-dependent formation of 5-methyl-uridine at position 54 (M-5-U54) in all tRNAs.</text>
</comment>
<comment type="catalytic activity">
    <reaction evidence="1">
        <text>uridine(54) in tRNA + (6R)-5,10-methylene-5,6,7,8-tetrahydrofolate + NADH + H(+) = 5-methyluridine(54) in tRNA + (6S)-5,6,7,8-tetrahydrofolate + NAD(+)</text>
        <dbReference type="Rhea" id="RHEA:16873"/>
        <dbReference type="Rhea" id="RHEA-COMP:10167"/>
        <dbReference type="Rhea" id="RHEA-COMP:10193"/>
        <dbReference type="ChEBI" id="CHEBI:15378"/>
        <dbReference type="ChEBI" id="CHEBI:15636"/>
        <dbReference type="ChEBI" id="CHEBI:57453"/>
        <dbReference type="ChEBI" id="CHEBI:57540"/>
        <dbReference type="ChEBI" id="CHEBI:57945"/>
        <dbReference type="ChEBI" id="CHEBI:65315"/>
        <dbReference type="ChEBI" id="CHEBI:74447"/>
        <dbReference type="EC" id="2.1.1.74"/>
    </reaction>
</comment>
<comment type="catalytic activity">
    <reaction evidence="1">
        <text>uridine(54) in tRNA + (6R)-5,10-methylene-5,6,7,8-tetrahydrofolate + NADPH + H(+) = 5-methyluridine(54) in tRNA + (6S)-5,6,7,8-tetrahydrofolate + NADP(+)</text>
        <dbReference type="Rhea" id="RHEA:62372"/>
        <dbReference type="Rhea" id="RHEA-COMP:10167"/>
        <dbReference type="Rhea" id="RHEA-COMP:10193"/>
        <dbReference type="ChEBI" id="CHEBI:15378"/>
        <dbReference type="ChEBI" id="CHEBI:15636"/>
        <dbReference type="ChEBI" id="CHEBI:57453"/>
        <dbReference type="ChEBI" id="CHEBI:57783"/>
        <dbReference type="ChEBI" id="CHEBI:58349"/>
        <dbReference type="ChEBI" id="CHEBI:65315"/>
        <dbReference type="ChEBI" id="CHEBI:74447"/>
        <dbReference type="EC" id="2.1.1.74"/>
    </reaction>
</comment>
<comment type="cofactor">
    <cofactor evidence="1">
        <name>FAD</name>
        <dbReference type="ChEBI" id="CHEBI:57692"/>
    </cofactor>
</comment>
<comment type="subcellular location">
    <subcellularLocation>
        <location evidence="1">Cytoplasm</location>
    </subcellularLocation>
</comment>
<comment type="similarity">
    <text evidence="1">Belongs to the MnmG family. TrmFO subfamily.</text>
</comment>
<organism>
    <name type="scientific">Streptococcus agalactiae serotype V (strain ATCC BAA-611 / 2603 V/R)</name>
    <dbReference type="NCBI Taxonomy" id="208435"/>
    <lineage>
        <taxon>Bacteria</taxon>
        <taxon>Bacillati</taxon>
        <taxon>Bacillota</taxon>
        <taxon>Bacilli</taxon>
        <taxon>Lactobacillales</taxon>
        <taxon>Streptococcaceae</taxon>
        <taxon>Streptococcus</taxon>
    </lineage>
</organism>
<reference key="1">
    <citation type="journal article" date="2002" name="Proc. Natl. Acad. Sci. U.S.A.">
        <title>Complete genome sequence and comparative genomic analysis of an emerging human pathogen, serotype V Streptococcus agalactiae.</title>
        <authorList>
            <person name="Tettelin H."/>
            <person name="Masignani V."/>
            <person name="Cieslewicz M.J."/>
            <person name="Eisen J.A."/>
            <person name="Peterson S.N."/>
            <person name="Wessels M.R."/>
            <person name="Paulsen I.T."/>
            <person name="Nelson K.E."/>
            <person name="Margarit I."/>
            <person name="Read T.D."/>
            <person name="Madoff L.C."/>
            <person name="Wolf A.M."/>
            <person name="Beanan M.J."/>
            <person name="Brinkac L.M."/>
            <person name="Daugherty S.C."/>
            <person name="DeBoy R.T."/>
            <person name="Durkin A.S."/>
            <person name="Kolonay J.F."/>
            <person name="Madupu R."/>
            <person name="Lewis M.R."/>
            <person name="Radune D."/>
            <person name="Fedorova N.B."/>
            <person name="Scanlan D."/>
            <person name="Khouri H.M."/>
            <person name="Mulligan S."/>
            <person name="Carty H.A."/>
            <person name="Cline R.T."/>
            <person name="Van Aken S.E."/>
            <person name="Gill J."/>
            <person name="Scarselli M."/>
            <person name="Mora M."/>
            <person name="Iacobini E.T."/>
            <person name="Brettoni C."/>
            <person name="Galli G."/>
            <person name="Mariani M."/>
            <person name="Vegni F."/>
            <person name="Maione D."/>
            <person name="Rinaudo D."/>
            <person name="Rappuoli R."/>
            <person name="Telford J.L."/>
            <person name="Kasper D.L."/>
            <person name="Grandi G."/>
            <person name="Fraser C.M."/>
        </authorList>
    </citation>
    <scope>NUCLEOTIDE SEQUENCE [LARGE SCALE GENOMIC DNA]</scope>
    <source>
        <strain>ATCC BAA-611 / 2603 V/R</strain>
    </source>
</reference>
<gene>
    <name evidence="1" type="primary">trmFO</name>
    <name type="synonym">gid</name>
    <name type="ordered locus">SAG0969</name>
</gene>
<protein>
    <recommendedName>
        <fullName evidence="1">Methylenetetrahydrofolate--tRNA-(uracil-5-)-methyltransferase TrmFO</fullName>
        <ecNumber evidence="1">2.1.1.74</ecNumber>
    </recommendedName>
    <alternativeName>
        <fullName evidence="1">Folate-dependent tRNA (uracil-5-)-methyltransferase</fullName>
    </alternativeName>
    <alternativeName>
        <fullName evidence="1">Folate-dependent tRNA(M-5-U54)-methyltransferase</fullName>
    </alternativeName>
</protein>
<name>TRMFO_STRA5</name>
<dbReference type="EC" id="2.1.1.74" evidence="1"/>
<dbReference type="EMBL" id="AE009948">
    <property type="protein sequence ID" value="AAM99853.1"/>
    <property type="molecule type" value="Genomic_DNA"/>
</dbReference>
<dbReference type="RefSeq" id="NP_687981.1">
    <property type="nucleotide sequence ID" value="NC_004116.1"/>
</dbReference>
<dbReference type="RefSeq" id="WP_000083750.1">
    <property type="nucleotide sequence ID" value="NC_004116.1"/>
</dbReference>
<dbReference type="SMR" id="Q8DZX5"/>
<dbReference type="STRING" id="208435.SAG0969"/>
<dbReference type="KEGG" id="sag:SAG0969"/>
<dbReference type="PATRIC" id="fig|208435.3.peg.975"/>
<dbReference type="HOGENOM" id="CLU_033057_1_0_9"/>
<dbReference type="OrthoDB" id="9803114at2"/>
<dbReference type="Proteomes" id="UP000000821">
    <property type="component" value="Chromosome"/>
</dbReference>
<dbReference type="GO" id="GO:0005829">
    <property type="term" value="C:cytosol"/>
    <property type="evidence" value="ECO:0007669"/>
    <property type="project" value="TreeGrafter"/>
</dbReference>
<dbReference type="GO" id="GO:0050660">
    <property type="term" value="F:flavin adenine dinucleotide binding"/>
    <property type="evidence" value="ECO:0007669"/>
    <property type="project" value="UniProtKB-UniRule"/>
</dbReference>
<dbReference type="GO" id="GO:0047151">
    <property type="term" value="F:tRNA (uracil(54)-C5)-methyltransferase activity, 5,10-methylenetetrahydrofolate-dependent"/>
    <property type="evidence" value="ECO:0007669"/>
    <property type="project" value="UniProtKB-UniRule"/>
</dbReference>
<dbReference type="GO" id="GO:0030488">
    <property type="term" value="P:tRNA methylation"/>
    <property type="evidence" value="ECO:0007669"/>
    <property type="project" value="TreeGrafter"/>
</dbReference>
<dbReference type="GO" id="GO:0002098">
    <property type="term" value="P:tRNA wobble uridine modification"/>
    <property type="evidence" value="ECO:0007669"/>
    <property type="project" value="TreeGrafter"/>
</dbReference>
<dbReference type="FunFam" id="3.50.50.60:FF:000035">
    <property type="entry name" value="Methylenetetrahydrofolate--tRNA-(uracil-5-)-methyltransferase TrmFO"/>
    <property type="match status" value="1"/>
</dbReference>
<dbReference type="FunFam" id="3.50.50.60:FF:000040">
    <property type="entry name" value="Methylenetetrahydrofolate--tRNA-(uracil-5-)-methyltransferase TrmFO"/>
    <property type="match status" value="1"/>
</dbReference>
<dbReference type="Gene3D" id="3.50.50.60">
    <property type="entry name" value="FAD/NAD(P)-binding domain"/>
    <property type="match status" value="2"/>
</dbReference>
<dbReference type="HAMAP" id="MF_01037">
    <property type="entry name" value="TrmFO"/>
    <property type="match status" value="1"/>
</dbReference>
<dbReference type="InterPro" id="IPR036188">
    <property type="entry name" value="FAD/NAD-bd_sf"/>
</dbReference>
<dbReference type="InterPro" id="IPR002218">
    <property type="entry name" value="MnmG-rel"/>
</dbReference>
<dbReference type="InterPro" id="IPR020595">
    <property type="entry name" value="MnmG-rel_CS"/>
</dbReference>
<dbReference type="InterPro" id="IPR040131">
    <property type="entry name" value="MnmG_N"/>
</dbReference>
<dbReference type="InterPro" id="IPR004417">
    <property type="entry name" value="TrmFO"/>
</dbReference>
<dbReference type="NCBIfam" id="TIGR00137">
    <property type="entry name" value="gid_trmFO"/>
    <property type="match status" value="1"/>
</dbReference>
<dbReference type="NCBIfam" id="NF003739">
    <property type="entry name" value="PRK05335.1"/>
    <property type="match status" value="1"/>
</dbReference>
<dbReference type="PANTHER" id="PTHR11806">
    <property type="entry name" value="GLUCOSE INHIBITED DIVISION PROTEIN A"/>
    <property type="match status" value="1"/>
</dbReference>
<dbReference type="PANTHER" id="PTHR11806:SF2">
    <property type="entry name" value="METHYLENETETRAHYDROFOLATE--TRNA-(URACIL-5-)-METHYLTRANSFERASE TRMFO"/>
    <property type="match status" value="1"/>
</dbReference>
<dbReference type="Pfam" id="PF01134">
    <property type="entry name" value="GIDA"/>
    <property type="match status" value="1"/>
</dbReference>
<dbReference type="SUPFAM" id="SSF51905">
    <property type="entry name" value="FAD/NAD(P)-binding domain"/>
    <property type="match status" value="1"/>
</dbReference>
<dbReference type="PROSITE" id="PS01281">
    <property type="entry name" value="GIDA_2"/>
    <property type="match status" value="1"/>
</dbReference>